<comment type="function">
    <text evidence="1">ATPase which is responsible for recognizing, binding, unfolding and translocation of pupylated proteins into the bacterial 20S proteasome core particle. May be essential for opening the gate of the 20S proteasome via an interaction with its C-terminus, thereby allowing substrate entry and access to the site of proteolysis. Thus, the C-termini of the proteasomal ATPase may function like a 'key in a lock' to induce gate opening and therefore regulate proteolysis.</text>
</comment>
<comment type="pathway">
    <text evidence="1">Protein degradation; proteasomal Pup-dependent pathway.</text>
</comment>
<comment type="subunit">
    <text evidence="1">Homohexamer. Assembles into a hexameric ring structure that caps the 20S proteasome core. Strongly interacts with the prokaryotic ubiquitin-like protein Pup through a hydrophobic interface; the interacting region of ARC lies in its N-terminal coiled-coil domain. There is one Pup binding site per ARC hexamer ring. Upon ATP-binding, the C-terminus of ARC interacts with the alpha-rings of the proteasome core, possibly by binding to the intersubunit pockets.</text>
</comment>
<comment type="domain">
    <text evidence="1">Consists of three main regions, an N-terminal coiled-coil domain that binds to protein Pup and functions as a docking station, an interdomain involved in ARC hexamerization, and a C-terminal ATPase domain of the AAA type.</text>
</comment>
<comment type="similarity">
    <text evidence="1">Belongs to the AAA ATPase family.</text>
</comment>
<accession>A0JWY3</accession>
<feature type="chain" id="PRO_0000396961" description="Proteasome-associated ATPase">
    <location>
        <begin position="1"/>
        <end position="594"/>
    </location>
</feature>
<feature type="region of interest" description="Disordered" evidence="2">
    <location>
        <begin position="1"/>
        <end position="23"/>
    </location>
</feature>
<feature type="region of interest" description="Docks into pockets in the proteasome alpha-ring" evidence="1">
    <location>
        <begin position="593"/>
        <end position="594"/>
    </location>
</feature>
<feature type="coiled-coil region" evidence="1">
    <location>
        <begin position="35"/>
        <end position="86"/>
    </location>
</feature>
<feature type="compositionally biased region" description="Polar residues" evidence="2">
    <location>
        <begin position="1"/>
        <end position="10"/>
    </location>
</feature>
<feature type="binding site" evidence="1">
    <location>
        <begin position="282"/>
        <end position="287"/>
    </location>
    <ligand>
        <name>ATP</name>
        <dbReference type="ChEBI" id="CHEBI:30616"/>
    </ligand>
</feature>
<evidence type="ECO:0000255" key="1">
    <source>
        <dbReference type="HAMAP-Rule" id="MF_02112"/>
    </source>
</evidence>
<evidence type="ECO:0000256" key="2">
    <source>
        <dbReference type="SAM" id="MobiDB-lite"/>
    </source>
</evidence>
<dbReference type="EMBL" id="CP000454">
    <property type="protein sequence ID" value="ABK03553.1"/>
    <property type="molecule type" value="Genomic_DNA"/>
</dbReference>
<dbReference type="SMR" id="A0JWY3"/>
<dbReference type="STRING" id="290399.Arth_2173"/>
<dbReference type="KEGG" id="art:Arth_2173"/>
<dbReference type="eggNOG" id="COG1222">
    <property type="taxonomic scope" value="Bacteria"/>
</dbReference>
<dbReference type="HOGENOM" id="CLU_036054_0_0_11"/>
<dbReference type="UniPathway" id="UPA00997"/>
<dbReference type="Proteomes" id="UP000000754">
    <property type="component" value="Chromosome"/>
</dbReference>
<dbReference type="GO" id="GO:0000502">
    <property type="term" value="C:proteasome complex"/>
    <property type="evidence" value="ECO:0007669"/>
    <property type="project" value="UniProtKB-KW"/>
</dbReference>
<dbReference type="GO" id="GO:0005524">
    <property type="term" value="F:ATP binding"/>
    <property type="evidence" value="ECO:0007669"/>
    <property type="project" value="UniProtKB-UniRule"/>
</dbReference>
<dbReference type="GO" id="GO:0016887">
    <property type="term" value="F:ATP hydrolysis activity"/>
    <property type="evidence" value="ECO:0007669"/>
    <property type="project" value="UniProtKB-UniRule"/>
</dbReference>
<dbReference type="GO" id="GO:0019941">
    <property type="term" value="P:modification-dependent protein catabolic process"/>
    <property type="evidence" value="ECO:0007669"/>
    <property type="project" value="InterPro"/>
</dbReference>
<dbReference type="GO" id="GO:0010498">
    <property type="term" value="P:proteasomal protein catabolic process"/>
    <property type="evidence" value="ECO:0007669"/>
    <property type="project" value="InterPro"/>
</dbReference>
<dbReference type="FunFam" id="3.40.50.300:FF:001025">
    <property type="entry name" value="ATPase family, AAA domain-containing 2B"/>
    <property type="match status" value="1"/>
</dbReference>
<dbReference type="Gene3D" id="1.10.8.60">
    <property type="match status" value="1"/>
</dbReference>
<dbReference type="Gene3D" id="1.20.5.170">
    <property type="match status" value="1"/>
</dbReference>
<dbReference type="Gene3D" id="2.40.50.140">
    <property type="entry name" value="Nucleic acid-binding proteins"/>
    <property type="match status" value="2"/>
</dbReference>
<dbReference type="Gene3D" id="3.40.50.300">
    <property type="entry name" value="P-loop containing nucleotide triphosphate hydrolases"/>
    <property type="match status" value="1"/>
</dbReference>
<dbReference type="HAMAP" id="MF_02112">
    <property type="entry name" value="ARC_ATPase"/>
    <property type="match status" value="1"/>
</dbReference>
<dbReference type="InterPro" id="IPR003593">
    <property type="entry name" value="AAA+_ATPase"/>
</dbReference>
<dbReference type="InterPro" id="IPR050168">
    <property type="entry name" value="AAA_ATPase_domain"/>
</dbReference>
<dbReference type="InterPro" id="IPR003959">
    <property type="entry name" value="ATPase_AAA_core"/>
</dbReference>
<dbReference type="InterPro" id="IPR003960">
    <property type="entry name" value="ATPase_AAA_CS"/>
</dbReference>
<dbReference type="InterPro" id="IPR012340">
    <property type="entry name" value="NA-bd_OB-fold"/>
</dbReference>
<dbReference type="InterPro" id="IPR027417">
    <property type="entry name" value="P-loop_NTPase"/>
</dbReference>
<dbReference type="InterPro" id="IPR032501">
    <property type="entry name" value="Prot_ATP_ID_OB_2nd"/>
</dbReference>
<dbReference type="InterPro" id="IPR041626">
    <property type="entry name" value="Prot_ATP_ID_OB_N"/>
</dbReference>
<dbReference type="InterPro" id="IPR022482">
    <property type="entry name" value="Proteasome_ATPase"/>
</dbReference>
<dbReference type="NCBIfam" id="TIGR03689">
    <property type="entry name" value="pup_AAA"/>
    <property type="match status" value="1"/>
</dbReference>
<dbReference type="PANTHER" id="PTHR23077">
    <property type="entry name" value="AAA-FAMILY ATPASE"/>
    <property type="match status" value="1"/>
</dbReference>
<dbReference type="PANTHER" id="PTHR23077:SF144">
    <property type="entry name" value="PROTEASOME-ASSOCIATED ATPASE"/>
    <property type="match status" value="1"/>
</dbReference>
<dbReference type="Pfam" id="PF00004">
    <property type="entry name" value="AAA"/>
    <property type="match status" value="1"/>
</dbReference>
<dbReference type="Pfam" id="PF16450">
    <property type="entry name" value="Prot_ATP_ID_OB_C"/>
    <property type="match status" value="1"/>
</dbReference>
<dbReference type="Pfam" id="PF17758">
    <property type="entry name" value="Prot_ATP_ID_OB_N"/>
    <property type="match status" value="1"/>
</dbReference>
<dbReference type="SMART" id="SM00382">
    <property type="entry name" value="AAA"/>
    <property type="match status" value="1"/>
</dbReference>
<dbReference type="SUPFAM" id="SSF52540">
    <property type="entry name" value="P-loop containing nucleoside triphosphate hydrolases"/>
    <property type="match status" value="1"/>
</dbReference>
<dbReference type="PROSITE" id="PS00674">
    <property type="entry name" value="AAA"/>
    <property type="match status" value="1"/>
</dbReference>
<gene>
    <name evidence="1" type="primary">arc</name>
    <name type="ordered locus">Arth_2173</name>
</gene>
<organism>
    <name type="scientific">Arthrobacter sp. (strain FB24)</name>
    <dbReference type="NCBI Taxonomy" id="290399"/>
    <lineage>
        <taxon>Bacteria</taxon>
        <taxon>Bacillati</taxon>
        <taxon>Actinomycetota</taxon>
        <taxon>Actinomycetes</taxon>
        <taxon>Micrococcales</taxon>
        <taxon>Micrococcaceae</taxon>
        <taxon>Arthrobacter</taxon>
    </lineage>
</organism>
<reference key="1">
    <citation type="journal article" date="2013" name="Stand. Genomic Sci.">
        <title>Complete genome sequence of Arthrobacter sp. strain FB24.</title>
        <authorList>
            <person name="Nakatsu C.H."/>
            <person name="Barabote R."/>
            <person name="Thompson S."/>
            <person name="Bruce D."/>
            <person name="Detter C."/>
            <person name="Brettin T."/>
            <person name="Han C."/>
            <person name="Beasley F."/>
            <person name="Chen W."/>
            <person name="Konopka A."/>
            <person name="Xie G."/>
        </authorList>
    </citation>
    <scope>NUCLEOTIDE SEQUENCE [LARGE SCALE GENOMIC DNA]</scope>
    <source>
        <strain>FB24</strain>
    </source>
</reference>
<proteinExistence type="inferred from homology"/>
<keyword id="KW-0067">ATP-binding</keyword>
<keyword id="KW-0143">Chaperone</keyword>
<keyword id="KW-0175">Coiled coil</keyword>
<keyword id="KW-0547">Nucleotide-binding</keyword>
<keyword id="KW-0647">Proteasome</keyword>
<keyword id="KW-1185">Reference proteome</keyword>
<protein>
    <recommendedName>
        <fullName evidence="1">Proteasome-associated ATPase</fullName>
    </recommendedName>
    <alternativeName>
        <fullName evidence="1">AAA ATPase forming ring-shaped complexes</fullName>
        <shortName evidence="1">ARC</shortName>
    </alternativeName>
    <alternativeName>
        <fullName evidence="1">Proteasomal ATPase</fullName>
    </alternativeName>
</protein>
<sequence length="594" mass="65505">MMETPNNDSSRTPDEAAGAPDPESARYVANELSVADRQVNILRDKLRHIDRQLAAATQNNSKLVGMLETAKAEILRLKNALDQEGQPPYSFGTILQLNPKRQPTAGNSGQAATEESVDIFNAGRKMRVGVSPLVNMNQLAVGQEVLLNEALLVVAGLGYERAGELVTLKEMLGTDRALVVGRADEERVIRLSGALMSEKLRVGDALSIDSRTGYALEKVPRSEVENLVLEEVPDITYEDIGGLGPQIEQIRDAVELPFLHPDLYREHGLKAPKGILLYGPPGCGKTLIAKAVANSLAARAAERTGNVDLKSYFLNIKGPELLDKYVGETERHIRLIFSRAREKASDGSPVVVFFDEMDSLFRTRGTGISSDVETTIVPQLLSEIDGVERLDNVIVIGASNREDMIDPAILRPGRLDVKVKIQRPDAEAAADIFYKYITTDLPFHESDLAEHSGDVQATVDAMIQRTVEAMYSTEKSNEYLEVTYANGDTEMLYFKDFNSGAVVQNVVDRAKKYAIKDLLTTQQKGLRIDHLLRAVVDEFREHEDMPNTTNPDDWARISGKKGERITYIRTIVQGKAGQEPGKSIETMPSTGQYL</sequence>
<name>ARC_ARTS2</name>